<sequence>MNLKDYIATIENYPKEGITFRDISPLMADGNAYSYAVREIVQYATDKKVDMIVGPEARGFIVGCPVAFELGIGFAPVRKPGKLPREVISADYEKEYGVDTLTMHADAIKPGQRVLIVDDLLATGGTVKATIEMIEKLGGVMAGCAFLVELDELNGREKIGDYDYKVLMHY</sequence>
<evidence type="ECO:0000255" key="1">
    <source>
        <dbReference type="HAMAP-Rule" id="MF_00004"/>
    </source>
</evidence>
<protein>
    <recommendedName>
        <fullName evidence="1">Adenine phosphoribosyltransferase</fullName>
        <shortName evidence="1">APRT</shortName>
        <ecNumber evidence="1">2.4.2.7</ecNumber>
    </recommendedName>
</protein>
<accession>B8ZLT9</accession>
<reference key="1">
    <citation type="journal article" date="2009" name="J. Bacteriol.">
        <title>Role of conjugative elements in the evolution of the multidrug-resistant pandemic clone Streptococcus pneumoniae Spain23F ST81.</title>
        <authorList>
            <person name="Croucher N.J."/>
            <person name="Walker D."/>
            <person name="Romero P."/>
            <person name="Lennard N."/>
            <person name="Paterson G.K."/>
            <person name="Bason N.C."/>
            <person name="Mitchell A.M."/>
            <person name="Quail M.A."/>
            <person name="Andrew P.W."/>
            <person name="Parkhill J."/>
            <person name="Bentley S.D."/>
            <person name="Mitchell T.J."/>
        </authorList>
    </citation>
    <scope>NUCLEOTIDE SEQUENCE [LARGE SCALE GENOMIC DNA]</scope>
    <source>
        <strain>ATCC 700669 / Spain 23F-1</strain>
    </source>
</reference>
<dbReference type="EC" id="2.4.2.7" evidence="1"/>
<dbReference type="EMBL" id="FM211187">
    <property type="protein sequence ID" value="CAR69372.1"/>
    <property type="molecule type" value="Genomic_DNA"/>
</dbReference>
<dbReference type="RefSeq" id="WP_001049323.1">
    <property type="nucleotide sequence ID" value="NC_011900.1"/>
</dbReference>
<dbReference type="SMR" id="B8ZLT9"/>
<dbReference type="KEGG" id="sne:SPN23F15940"/>
<dbReference type="HOGENOM" id="CLU_063339_3_0_9"/>
<dbReference type="UniPathway" id="UPA00588">
    <property type="reaction ID" value="UER00646"/>
</dbReference>
<dbReference type="GO" id="GO:0005737">
    <property type="term" value="C:cytoplasm"/>
    <property type="evidence" value="ECO:0007669"/>
    <property type="project" value="UniProtKB-SubCell"/>
</dbReference>
<dbReference type="GO" id="GO:0002055">
    <property type="term" value="F:adenine binding"/>
    <property type="evidence" value="ECO:0007669"/>
    <property type="project" value="TreeGrafter"/>
</dbReference>
<dbReference type="GO" id="GO:0003999">
    <property type="term" value="F:adenine phosphoribosyltransferase activity"/>
    <property type="evidence" value="ECO:0007669"/>
    <property type="project" value="UniProtKB-UniRule"/>
</dbReference>
<dbReference type="GO" id="GO:0016208">
    <property type="term" value="F:AMP binding"/>
    <property type="evidence" value="ECO:0007669"/>
    <property type="project" value="TreeGrafter"/>
</dbReference>
<dbReference type="GO" id="GO:0006168">
    <property type="term" value="P:adenine salvage"/>
    <property type="evidence" value="ECO:0007669"/>
    <property type="project" value="InterPro"/>
</dbReference>
<dbReference type="GO" id="GO:0044209">
    <property type="term" value="P:AMP salvage"/>
    <property type="evidence" value="ECO:0007669"/>
    <property type="project" value="UniProtKB-UniRule"/>
</dbReference>
<dbReference type="GO" id="GO:0006166">
    <property type="term" value="P:purine ribonucleoside salvage"/>
    <property type="evidence" value="ECO:0007669"/>
    <property type="project" value="UniProtKB-KW"/>
</dbReference>
<dbReference type="CDD" id="cd06223">
    <property type="entry name" value="PRTases_typeI"/>
    <property type="match status" value="1"/>
</dbReference>
<dbReference type="FunFam" id="3.40.50.2020:FF:000004">
    <property type="entry name" value="Adenine phosphoribosyltransferase"/>
    <property type="match status" value="1"/>
</dbReference>
<dbReference type="Gene3D" id="3.40.50.2020">
    <property type="match status" value="1"/>
</dbReference>
<dbReference type="HAMAP" id="MF_00004">
    <property type="entry name" value="Aden_phosphoribosyltr"/>
    <property type="match status" value="1"/>
</dbReference>
<dbReference type="InterPro" id="IPR005764">
    <property type="entry name" value="Ade_phspho_trans"/>
</dbReference>
<dbReference type="InterPro" id="IPR000836">
    <property type="entry name" value="PRibTrfase_dom"/>
</dbReference>
<dbReference type="InterPro" id="IPR029057">
    <property type="entry name" value="PRTase-like"/>
</dbReference>
<dbReference type="InterPro" id="IPR050054">
    <property type="entry name" value="UPRTase/APRTase"/>
</dbReference>
<dbReference type="NCBIfam" id="TIGR01090">
    <property type="entry name" value="apt"/>
    <property type="match status" value="1"/>
</dbReference>
<dbReference type="NCBIfam" id="NF002633">
    <property type="entry name" value="PRK02304.1-2"/>
    <property type="match status" value="1"/>
</dbReference>
<dbReference type="NCBIfam" id="NF002634">
    <property type="entry name" value="PRK02304.1-3"/>
    <property type="match status" value="1"/>
</dbReference>
<dbReference type="NCBIfam" id="NF002636">
    <property type="entry name" value="PRK02304.1-5"/>
    <property type="match status" value="1"/>
</dbReference>
<dbReference type="PANTHER" id="PTHR32315">
    <property type="entry name" value="ADENINE PHOSPHORIBOSYLTRANSFERASE"/>
    <property type="match status" value="1"/>
</dbReference>
<dbReference type="PANTHER" id="PTHR32315:SF3">
    <property type="entry name" value="ADENINE PHOSPHORIBOSYLTRANSFERASE"/>
    <property type="match status" value="1"/>
</dbReference>
<dbReference type="Pfam" id="PF00156">
    <property type="entry name" value="Pribosyltran"/>
    <property type="match status" value="1"/>
</dbReference>
<dbReference type="SUPFAM" id="SSF53271">
    <property type="entry name" value="PRTase-like"/>
    <property type="match status" value="1"/>
</dbReference>
<dbReference type="PROSITE" id="PS00103">
    <property type="entry name" value="PUR_PYR_PR_TRANSFER"/>
    <property type="match status" value="1"/>
</dbReference>
<proteinExistence type="inferred from homology"/>
<organism>
    <name type="scientific">Streptococcus pneumoniae (strain ATCC 700669 / Spain 23F-1)</name>
    <dbReference type="NCBI Taxonomy" id="561276"/>
    <lineage>
        <taxon>Bacteria</taxon>
        <taxon>Bacillati</taxon>
        <taxon>Bacillota</taxon>
        <taxon>Bacilli</taxon>
        <taxon>Lactobacillales</taxon>
        <taxon>Streptococcaceae</taxon>
        <taxon>Streptococcus</taxon>
    </lineage>
</organism>
<name>APT_STRPJ</name>
<keyword id="KW-0963">Cytoplasm</keyword>
<keyword id="KW-0328">Glycosyltransferase</keyword>
<keyword id="KW-0660">Purine salvage</keyword>
<keyword id="KW-0808">Transferase</keyword>
<comment type="function">
    <text evidence="1">Catalyzes a salvage reaction resulting in the formation of AMP, that is energically less costly than de novo synthesis.</text>
</comment>
<comment type="catalytic activity">
    <reaction evidence="1">
        <text>AMP + diphosphate = 5-phospho-alpha-D-ribose 1-diphosphate + adenine</text>
        <dbReference type="Rhea" id="RHEA:16609"/>
        <dbReference type="ChEBI" id="CHEBI:16708"/>
        <dbReference type="ChEBI" id="CHEBI:33019"/>
        <dbReference type="ChEBI" id="CHEBI:58017"/>
        <dbReference type="ChEBI" id="CHEBI:456215"/>
        <dbReference type="EC" id="2.4.2.7"/>
    </reaction>
</comment>
<comment type="pathway">
    <text evidence="1">Purine metabolism; AMP biosynthesis via salvage pathway; AMP from adenine: step 1/1.</text>
</comment>
<comment type="subunit">
    <text evidence="1">Homodimer.</text>
</comment>
<comment type="subcellular location">
    <subcellularLocation>
        <location evidence="1">Cytoplasm</location>
    </subcellularLocation>
</comment>
<comment type="similarity">
    <text evidence="1">Belongs to the purine/pyrimidine phosphoribosyltransferase family.</text>
</comment>
<feature type="chain" id="PRO_1000116259" description="Adenine phosphoribosyltransferase">
    <location>
        <begin position="1"/>
        <end position="170"/>
    </location>
</feature>
<gene>
    <name evidence="1" type="primary">apt</name>
    <name type="ordered locus">SPN23F15940</name>
</gene>